<comment type="similarity">
    <text evidence="2">Belongs to the UPF0164 family.</text>
</comment>
<sequence length="325" mass="34055">MVHYKSVFYKSAALVCGFVLAGASVAIASSEAAAKTRSKMSEFKRRAVSSPSGGRLSVLDGSFTALANDASFFEANPAGSANMTHSELTFAHTVGFNNSHAETLSYVGQSGNWGYGASMRMFFPESGFNFSPSTGPVCTPASNPIKKLGGLGIVNFSRRFGGLSIGANLKAGFRDAQGLTHLSLGTDVGLQWVGNVAKFFSSAEPNMYVGLSATNLGFTVKLPGSPFVLCRATGEQCCKTCSGRCTGVGTCCNGEKPCCKDCDCNCPCQDEATPGSPHATDTMLRAGFAYRPLSWFLFSVGVATRVNVSNLQVDHSGSALPMRLG</sequence>
<gene>
    <name type="ordered locus">TP_0856</name>
</gene>
<organism>
    <name type="scientific">Treponema pallidum (strain Nichols)</name>
    <dbReference type="NCBI Taxonomy" id="243276"/>
    <lineage>
        <taxon>Bacteria</taxon>
        <taxon>Pseudomonadati</taxon>
        <taxon>Spirochaetota</taxon>
        <taxon>Spirochaetia</taxon>
        <taxon>Spirochaetales</taxon>
        <taxon>Treponemataceae</taxon>
        <taxon>Treponema</taxon>
    </lineage>
</organism>
<reference key="1">
    <citation type="journal article" date="1998" name="Science">
        <title>Complete genome sequence of Treponema pallidum, the syphilis spirochete.</title>
        <authorList>
            <person name="Fraser C.M."/>
            <person name="Norris S.J."/>
            <person name="Weinstock G.M."/>
            <person name="White O."/>
            <person name="Sutton G.G."/>
            <person name="Dodson R.J."/>
            <person name="Gwinn M.L."/>
            <person name="Hickey E.K."/>
            <person name="Clayton R.A."/>
            <person name="Ketchum K.A."/>
            <person name="Sodergren E."/>
            <person name="Hardham J.M."/>
            <person name="McLeod M.P."/>
            <person name="Salzberg S.L."/>
            <person name="Peterson J.D."/>
            <person name="Khalak H.G."/>
            <person name="Richardson D.L."/>
            <person name="Howell J.K."/>
            <person name="Chidambaram M."/>
            <person name="Utterback T.R."/>
            <person name="McDonald L.A."/>
            <person name="Artiach P."/>
            <person name="Bowman C."/>
            <person name="Cotton M.D."/>
            <person name="Fujii C."/>
            <person name="Garland S.A."/>
            <person name="Hatch B."/>
            <person name="Horst K."/>
            <person name="Roberts K.M."/>
            <person name="Sandusky M."/>
            <person name="Weidman J.F."/>
            <person name="Smith H.O."/>
            <person name="Venter J.C."/>
        </authorList>
    </citation>
    <scope>NUCLEOTIDE SEQUENCE [LARGE SCALE GENOMIC DNA]</scope>
    <source>
        <strain>Nichols</strain>
    </source>
</reference>
<protein>
    <recommendedName>
        <fullName>UPF0164 protein TP_0856</fullName>
    </recommendedName>
</protein>
<dbReference type="EMBL" id="AE000520">
    <property type="protein sequence ID" value="AAC65828.1"/>
    <property type="molecule type" value="Genomic_DNA"/>
</dbReference>
<dbReference type="PIR" id="H71271">
    <property type="entry name" value="H71271"/>
</dbReference>
<dbReference type="IntAct" id="O83828">
    <property type="interactions" value="5"/>
</dbReference>
<dbReference type="STRING" id="243276.TP_0856"/>
<dbReference type="EnsemblBacteria" id="AAC65828">
    <property type="protein sequence ID" value="AAC65828"/>
    <property type="gene ID" value="TP_0856"/>
</dbReference>
<dbReference type="KEGG" id="tpa:TP_0856"/>
<dbReference type="HOGENOM" id="CLU_060535_0_0_12"/>
<dbReference type="Proteomes" id="UP000000811">
    <property type="component" value="Chromosome"/>
</dbReference>
<dbReference type="Gene3D" id="2.40.160.60">
    <property type="entry name" value="Outer membrane protein transport protein (OMPP1/FadL/TodX)"/>
    <property type="match status" value="1"/>
</dbReference>
<dbReference type="InterPro" id="IPR005362">
    <property type="entry name" value="UPF0164"/>
</dbReference>
<dbReference type="Pfam" id="PF03687">
    <property type="entry name" value="UPF0164"/>
    <property type="match status" value="1"/>
</dbReference>
<feature type="signal peptide" evidence="1">
    <location>
        <begin position="1"/>
        <end position="28"/>
    </location>
</feature>
<feature type="chain" id="PRO_0000036217" description="UPF0164 protein TP_0856">
    <location>
        <begin position="29"/>
        <end position="325"/>
    </location>
</feature>
<name>Y856_TREPA</name>
<evidence type="ECO:0000255" key="1"/>
<evidence type="ECO:0000305" key="2"/>
<proteinExistence type="inferred from homology"/>
<keyword id="KW-1185">Reference proteome</keyword>
<keyword id="KW-0732">Signal</keyword>
<accession>O83828</accession>